<gene>
    <name evidence="1" type="primary">nrdR</name>
    <name type="ordered locus">lmo1562</name>
</gene>
<feature type="chain" id="PRO_0000182314" description="Transcriptional repressor NrdR">
    <location>
        <begin position="1"/>
        <end position="154"/>
    </location>
</feature>
<feature type="domain" description="ATP-cone" evidence="1">
    <location>
        <begin position="49"/>
        <end position="139"/>
    </location>
</feature>
<feature type="zinc finger region" evidence="1">
    <location>
        <begin position="3"/>
        <end position="34"/>
    </location>
</feature>
<sequence length="154" mass="17937">MRCPTCQYNGTRVVDSRPADDGNSIRRRRECEKCGFRFTTFEKVEESPLIVVKKDGAREEFAREKVRRGLIRACEKRPVSAEQIEEIVNEVERELRNIGDSEIASDLIGEKVMNKLANLDEVAYVRFASVYRQFKDISVFVEELKDLMEKNKDR</sequence>
<keyword id="KW-0067">ATP-binding</keyword>
<keyword id="KW-0238">DNA-binding</keyword>
<keyword id="KW-0479">Metal-binding</keyword>
<keyword id="KW-0547">Nucleotide-binding</keyword>
<keyword id="KW-1185">Reference proteome</keyword>
<keyword id="KW-0678">Repressor</keyword>
<keyword id="KW-0804">Transcription</keyword>
<keyword id="KW-0805">Transcription regulation</keyword>
<keyword id="KW-0862">Zinc</keyword>
<keyword id="KW-0863">Zinc-finger</keyword>
<accession>Q8Y6W9</accession>
<organism>
    <name type="scientific">Listeria monocytogenes serovar 1/2a (strain ATCC BAA-679 / EGD-e)</name>
    <dbReference type="NCBI Taxonomy" id="169963"/>
    <lineage>
        <taxon>Bacteria</taxon>
        <taxon>Bacillati</taxon>
        <taxon>Bacillota</taxon>
        <taxon>Bacilli</taxon>
        <taxon>Bacillales</taxon>
        <taxon>Listeriaceae</taxon>
        <taxon>Listeria</taxon>
    </lineage>
</organism>
<evidence type="ECO:0000255" key="1">
    <source>
        <dbReference type="HAMAP-Rule" id="MF_00440"/>
    </source>
</evidence>
<comment type="function">
    <text evidence="1">Negatively regulates transcription of bacterial ribonucleotide reductase nrd genes and operons by binding to NrdR-boxes.</text>
</comment>
<comment type="cofactor">
    <cofactor evidence="1">
        <name>Zn(2+)</name>
        <dbReference type="ChEBI" id="CHEBI:29105"/>
    </cofactor>
    <text evidence="1">Binds 1 zinc ion.</text>
</comment>
<comment type="similarity">
    <text evidence="1">Belongs to the NrdR family.</text>
</comment>
<protein>
    <recommendedName>
        <fullName evidence="1">Transcriptional repressor NrdR</fullName>
    </recommendedName>
</protein>
<dbReference type="EMBL" id="AL591979">
    <property type="protein sequence ID" value="CAC99640.1"/>
    <property type="molecule type" value="Genomic_DNA"/>
</dbReference>
<dbReference type="PIR" id="AB1270">
    <property type="entry name" value="AB1270"/>
</dbReference>
<dbReference type="RefSeq" id="NP_465087.1">
    <property type="nucleotide sequence ID" value="NC_003210.1"/>
</dbReference>
<dbReference type="RefSeq" id="WP_003723246.1">
    <property type="nucleotide sequence ID" value="NZ_CP149495.1"/>
</dbReference>
<dbReference type="SMR" id="Q8Y6W9"/>
<dbReference type="STRING" id="169963.gene:17594219"/>
<dbReference type="PaxDb" id="169963-lmo1562"/>
<dbReference type="EnsemblBacteria" id="CAC99640">
    <property type="protein sequence ID" value="CAC99640"/>
    <property type="gene ID" value="CAC99640"/>
</dbReference>
<dbReference type="GeneID" id="986952"/>
<dbReference type="KEGG" id="lmo:lmo1562"/>
<dbReference type="PATRIC" id="fig|169963.11.peg.1603"/>
<dbReference type="eggNOG" id="COG1327">
    <property type="taxonomic scope" value="Bacteria"/>
</dbReference>
<dbReference type="HOGENOM" id="CLU_108412_0_0_9"/>
<dbReference type="OrthoDB" id="9807461at2"/>
<dbReference type="PhylomeDB" id="Q8Y6W9"/>
<dbReference type="BioCyc" id="LMON169963:LMO1562-MONOMER"/>
<dbReference type="Proteomes" id="UP000000817">
    <property type="component" value="Chromosome"/>
</dbReference>
<dbReference type="GO" id="GO:0005524">
    <property type="term" value="F:ATP binding"/>
    <property type="evidence" value="ECO:0007669"/>
    <property type="project" value="UniProtKB-KW"/>
</dbReference>
<dbReference type="GO" id="GO:0003690">
    <property type="term" value="F:double-stranded DNA binding"/>
    <property type="evidence" value="ECO:0000318"/>
    <property type="project" value="GO_Central"/>
</dbReference>
<dbReference type="GO" id="GO:0008270">
    <property type="term" value="F:zinc ion binding"/>
    <property type="evidence" value="ECO:0007669"/>
    <property type="project" value="UniProtKB-UniRule"/>
</dbReference>
<dbReference type="GO" id="GO:0045892">
    <property type="term" value="P:negative regulation of DNA-templated transcription"/>
    <property type="evidence" value="ECO:0000318"/>
    <property type="project" value="GO_Central"/>
</dbReference>
<dbReference type="HAMAP" id="MF_00440">
    <property type="entry name" value="NrdR"/>
    <property type="match status" value="1"/>
</dbReference>
<dbReference type="InterPro" id="IPR005144">
    <property type="entry name" value="ATP-cone_dom"/>
</dbReference>
<dbReference type="InterPro" id="IPR055173">
    <property type="entry name" value="NrdR-like_N"/>
</dbReference>
<dbReference type="InterPro" id="IPR003796">
    <property type="entry name" value="RNR_NrdR-like"/>
</dbReference>
<dbReference type="NCBIfam" id="TIGR00244">
    <property type="entry name" value="transcriptional regulator NrdR"/>
    <property type="match status" value="1"/>
</dbReference>
<dbReference type="PANTHER" id="PTHR30455">
    <property type="entry name" value="TRANSCRIPTIONAL REPRESSOR NRDR"/>
    <property type="match status" value="1"/>
</dbReference>
<dbReference type="PANTHER" id="PTHR30455:SF2">
    <property type="entry name" value="TRANSCRIPTIONAL REPRESSOR NRDR"/>
    <property type="match status" value="1"/>
</dbReference>
<dbReference type="Pfam" id="PF03477">
    <property type="entry name" value="ATP-cone"/>
    <property type="match status" value="1"/>
</dbReference>
<dbReference type="Pfam" id="PF22811">
    <property type="entry name" value="Zn_ribbon_NrdR"/>
    <property type="match status" value="1"/>
</dbReference>
<dbReference type="PROSITE" id="PS51161">
    <property type="entry name" value="ATP_CONE"/>
    <property type="match status" value="1"/>
</dbReference>
<name>NRDR_LISMO</name>
<reference key="1">
    <citation type="journal article" date="2001" name="Science">
        <title>Comparative genomics of Listeria species.</title>
        <authorList>
            <person name="Glaser P."/>
            <person name="Frangeul L."/>
            <person name="Buchrieser C."/>
            <person name="Rusniok C."/>
            <person name="Amend A."/>
            <person name="Baquero F."/>
            <person name="Berche P."/>
            <person name="Bloecker H."/>
            <person name="Brandt P."/>
            <person name="Chakraborty T."/>
            <person name="Charbit A."/>
            <person name="Chetouani F."/>
            <person name="Couve E."/>
            <person name="de Daruvar A."/>
            <person name="Dehoux P."/>
            <person name="Domann E."/>
            <person name="Dominguez-Bernal G."/>
            <person name="Duchaud E."/>
            <person name="Durant L."/>
            <person name="Dussurget O."/>
            <person name="Entian K.-D."/>
            <person name="Fsihi H."/>
            <person name="Garcia-del Portillo F."/>
            <person name="Garrido P."/>
            <person name="Gautier L."/>
            <person name="Goebel W."/>
            <person name="Gomez-Lopez N."/>
            <person name="Hain T."/>
            <person name="Hauf J."/>
            <person name="Jackson D."/>
            <person name="Jones L.-M."/>
            <person name="Kaerst U."/>
            <person name="Kreft J."/>
            <person name="Kuhn M."/>
            <person name="Kunst F."/>
            <person name="Kurapkat G."/>
            <person name="Madueno E."/>
            <person name="Maitournam A."/>
            <person name="Mata Vicente J."/>
            <person name="Ng E."/>
            <person name="Nedjari H."/>
            <person name="Nordsiek G."/>
            <person name="Novella S."/>
            <person name="de Pablos B."/>
            <person name="Perez-Diaz J.-C."/>
            <person name="Purcell R."/>
            <person name="Remmel B."/>
            <person name="Rose M."/>
            <person name="Schlueter T."/>
            <person name="Simoes N."/>
            <person name="Tierrez A."/>
            <person name="Vazquez-Boland J.-A."/>
            <person name="Voss H."/>
            <person name="Wehland J."/>
            <person name="Cossart P."/>
        </authorList>
    </citation>
    <scope>NUCLEOTIDE SEQUENCE [LARGE SCALE GENOMIC DNA]</scope>
    <source>
        <strain>ATCC BAA-679 / EGD-e</strain>
    </source>
</reference>
<proteinExistence type="inferred from homology"/>